<sequence length="481" mass="53368">MPGFQSLRLDVLSPVDHSFPDYNPCYYLYFRSPSASDVRTSLQRGLEKLIKILPFITGEVVPCDGDRMEKRNGLLCIKYTASPDESLPIIEFREDMSLSVENISTSKTRTGLEDVHLAKTLAPLPLTPNPSRPSYVVRFRATTVRDGVVLAMSFSHFVFDATGAGHLMEHFAECVREPEPKPCDIDQETLRQALWHINGDTGVIPNEPGDCHSLPAFMLPPGGREAIPEMAAPGMRVCRWKISAAKVELLKNTCNDLLRSLDYKAGDNSVNFLSSQDVLTGLLTTCLKHDPKGKVEGSDIGVAVNLRNRLSPEWPTGYFGNMAKYAIAPGLAEPTAEELAVAHRLVAENPKILPAASDIARLYRNACSIRHTISQISDVHIRGFVSWLNSCKDLGPLTTPFPFINFTSWRHLNLYELDFGGALGYVDDIQTHGMMPTLGIILPRAKAVQGTEAHWDVLFYVKNEDYPAVMKQGLLRFLTVD</sequence>
<dbReference type="EC" id="2.3.1.-" evidence="2"/>
<dbReference type="EMBL" id="AB981314">
    <property type="protein sequence ID" value="BAP81861.1"/>
    <property type="molecule type" value="Genomic_DNA"/>
</dbReference>
<dbReference type="SMR" id="A0A097ZPE2"/>
<dbReference type="BioCyc" id="MetaCyc:MONOMER-19054"/>
<dbReference type="UniPathway" id="UPA00213"/>
<dbReference type="GO" id="GO:0016747">
    <property type="term" value="F:acyltransferase activity, transferring groups other than amino-acyl groups"/>
    <property type="evidence" value="ECO:0007669"/>
    <property type="project" value="TreeGrafter"/>
</dbReference>
<dbReference type="GO" id="GO:0016114">
    <property type="term" value="P:terpenoid biosynthetic process"/>
    <property type="evidence" value="ECO:0007669"/>
    <property type="project" value="UniProtKB-UniPathway"/>
</dbReference>
<dbReference type="Gene3D" id="3.30.559.10">
    <property type="entry name" value="Chloramphenicol acetyltransferase-like domain"/>
    <property type="match status" value="2"/>
</dbReference>
<dbReference type="InterPro" id="IPR023213">
    <property type="entry name" value="CAT-like_dom_sf"/>
</dbReference>
<dbReference type="InterPro" id="IPR050317">
    <property type="entry name" value="Plant_Fungal_Acyltransferase"/>
</dbReference>
<dbReference type="PANTHER" id="PTHR31642:SF270">
    <property type="entry name" value="O-ACYLTRANSFERASE AUSQ"/>
    <property type="match status" value="1"/>
</dbReference>
<dbReference type="PANTHER" id="PTHR31642">
    <property type="entry name" value="TRICHOTHECENE 3-O-ACETYLTRANSFERASE"/>
    <property type="match status" value="1"/>
</dbReference>
<dbReference type="Pfam" id="PF02458">
    <property type="entry name" value="Transferase"/>
    <property type="match status" value="1"/>
</dbReference>
<comment type="function">
    <text evidence="2">O-acetyltransferase; part of the gene cluster that mediates the biosynthesis of anditomin, a fungal meroterpenoid (PubMed:25216349). The first step of the pathway is the synthesis of 3,5-dimethylorsellinic acid (DMOA) by the polyketide synthase andM (PubMed:25216349). DMOA is then converted to the phthalide compound 5,7-dihydroxy-4,6-dimethylphthalide (DHDMP) by the cytochrome P450 monooxygenase andK, which is further prenylated by the prenyltransferase andD to yield farnesyl-DHDMP (PubMed:25216349). Further epoxidation by the FAD-dependent monooxygenase andE leads to epoxyfarnesyl-DHDMP (PubMed:25216349). The next step involves the terpene cyclase andB that converts epoxyfarnesyl-DHDMP into preandiloid A through opening of the epoxide ring followed by the cyclization of the farnesyl moiety (PubMed:25216349). Preandiloid A is in turn oxidized at the C-3 hydroxyl group to yield preandiloid B by the dehydrogenase andC (PubMed:25216349). The dioxygenase andA is solely responsible for the dehydrogenation of preandiloid B leading to the enone preandiloid C, as well as for the intriguing structural rearrangement to generate the bicyclo[2.2.2]octane core, transforming preandiloid C into andiconin (PubMed:25216349). FAD-binding monooxygenase andJ then produces andilesin D which is reduced by dehydrogenase andI to yield andilesin A (PubMed:25216349). Action of acetyltransferase andG followed by a spontaneous acetate elimination leads then to andilesin B, which is in turn substrate of the short chain dehydrogenase andH to yield andilesin C (PubMed:25216349). Finally, the dioxygenase andF catalyzes the transformation of andilesin C to anditomin (PubMed:25216349).</text>
</comment>
<comment type="pathway">
    <text evidence="2">Secondary metabolite biosynthesis; terpenoid biosynthesis.</text>
</comment>
<comment type="subunit">
    <text evidence="1">Monomer.</text>
</comment>
<comment type="similarity">
    <text evidence="4">Belongs to the fumigaclavine B O-acetyltransferase family.</text>
</comment>
<name>ANDG_EMEVA</name>
<protein>
    <recommendedName>
        <fullName evidence="4">O-acetyltransferase andG</fullName>
        <ecNumber evidence="2">2.3.1.-</ecNumber>
    </recommendedName>
    <alternativeName>
        <fullName evidence="3">Anditomin synthesis protein G</fullName>
    </alternativeName>
</protein>
<reference key="1">
    <citation type="journal article" date="2014" name="J. Am. Chem. Soc.">
        <title>Complete biosynthetic pathway of anditomin: nature's sophisticated synthetic route to a complex fungal meroterpenoid.</title>
        <authorList>
            <person name="Matsuda Y."/>
            <person name="Wakimoto T."/>
            <person name="Mori T."/>
            <person name="Awakawa T."/>
            <person name="Abe I."/>
        </authorList>
    </citation>
    <scope>NUCLEOTIDE SEQUENCE [GENOMIC DNA]</scope>
    <scope>FUNCTION</scope>
    <scope>CATALYTIC ACTIVITY</scope>
    <source>
        <strain>ATCC 12069 / CBS 136.55 / IMI 60316 / NBRC 32302</strain>
    </source>
</reference>
<keyword id="KW-0012">Acyltransferase</keyword>
<keyword id="KW-0808">Transferase</keyword>
<organism>
    <name type="scientific">Emericella variicolor</name>
    <name type="common">Aspergillus stellatus</name>
    <dbReference type="NCBI Taxonomy" id="1549217"/>
    <lineage>
        <taxon>Eukaryota</taxon>
        <taxon>Fungi</taxon>
        <taxon>Dikarya</taxon>
        <taxon>Ascomycota</taxon>
        <taxon>Pezizomycotina</taxon>
        <taxon>Eurotiomycetes</taxon>
        <taxon>Eurotiomycetidae</taxon>
        <taxon>Eurotiales</taxon>
        <taxon>Aspergillaceae</taxon>
        <taxon>Aspergillus</taxon>
        <taxon>Aspergillus subgen. Nidulantes</taxon>
    </lineage>
</organism>
<accession>A0A097ZPE2</accession>
<proteinExistence type="evidence at protein level"/>
<feature type="chain" id="PRO_0000436583" description="O-acetyltransferase andG">
    <location>
        <begin position="1"/>
        <end position="481"/>
    </location>
</feature>
<evidence type="ECO:0000250" key="1">
    <source>
        <dbReference type="UniProtKB" id="Q4WZ64"/>
    </source>
</evidence>
<evidence type="ECO:0000269" key="2">
    <source>
    </source>
</evidence>
<evidence type="ECO:0000303" key="3">
    <source>
    </source>
</evidence>
<evidence type="ECO:0000305" key="4"/>
<gene>
    <name evidence="3" type="primary">andG</name>
</gene>